<proteinExistence type="inferred from homology"/>
<name>NUOI_YERPG</name>
<sequence>MTLKELVVGFGTQVRSLWMIGLHAFHKRETLMYPEEPVYLPPRYRGRIVLTRDPDGEERCVACNLCAVACPVGCISLQKAEQKDGRWYPEFFRINFSRCIFCGLCEEACPTTAIQLTPDFEMGEFKRQDLVYEKEDLLISGPGKYPEYNFYRMAGMAIDGKQKGEAENEAKPIDVKGLMP</sequence>
<accession>A9R6L4</accession>
<feature type="chain" id="PRO_1000166644" description="NADH-quinone oxidoreductase subunit I">
    <location>
        <begin position="1"/>
        <end position="180"/>
    </location>
</feature>
<feature type="domain" description="4Fe-4S ferredoxin-type 1" evidence="1">
    <location>
        <begin position="50"/>
        <end position="80"/>
    </location>
</feature>
<feature type="domain" description="4Fe-4S ferredoxin-type 2" evidence="1">
    <location>
        <begin position="90"/>
        <end position="119"/>
    </location>
</feature>
<feature type="binding site" evidence="1">
    <location>
        <position position="60"/>
    </location>
    <ligand>
        <name>[4Fe-4S] cluster</name>
        <dbReference type="ChEBI" id="CHEBI:49883"/>
        <label>1</label>
    </ligand>
</feature>
<feature type="binding site" evidence="1">
    <location>
        <position position="63"/>
    </location>
    <ligand>
        <name>[4Fe-4S] cluster</name>
        <dbReference type="ChEBI" id="CHEBI:49883"/>
        <label>1</label>
    </ligand>
</feature>
<feature type="binding site" evidence="1">
    <location>
        <position position="66"/>
    </location>
    <ligand>
        <name>[4Fe-4S] cluster</name>
        <dbReference type="ChEBI" id="CHEBI:49883"/>
        <label>1</label>
    </ligand>
</feature>
<feature type="binding site" evidence="1">
    <location>
        <position position="70"/>
    </location>
    <ligand>
        <name>[4Fe-4S] cluster</name>
        <dbReference type="ChEBI" id="CHEBI:49883"/>
        <label>2</label>
    </ligand>
</feature>
<feature type="binding site" evidence="1">
    <location>
        <position position="99"/>
    </location>
    <ligand>
        <name>[4Fe-4S] cluster</name>
        <dbReference type="ChEBI" id="CHEBI:49883"/>
        <label>2</label>
    </ligand>
</feature>
<feature type="binding site" evidence="1">
    <location>
        <position position="102"/>
    </location>
    <ligand>
        <name>[4Fe-4S] cluster</name>
        <dbReference type="ChEBI" id="CHEBI:49883"/>
        <label>2</label>
    </ligand>
</feature>
<feature type="binding site" evidence="1">
    <location>
        <position position="105"/>
    </location>
    <ligand>
        <name>[4Fe-4S] cluster</name>
        <dbReference type="ChEBI" id="CHEBI:49883"/>
        <label>2</label>
    </ligand>
</feature>
<feature type="binding site" evidence="1">
    <location>
        <position position="109"/>
    </location>
    <ligand>
        <name>[4Fe-4S] cluster</name>
        <dbReference type="ChEBI" id="CHEBI:49883"/>
        <label>1</label>
    </ligand>
</feature>
<keyword id="KW-0004">4Fe-4S</keyword>
<keyword id="KW-0997">Cell inner membrane</keyword>
<keyword id="KW-1003">Cell membrane</keyword>
<keyword id="KW-0408">Iron</keyword>
<keyword id="KW-0411">Iron-sulfur</keyword>
<keyword id="KW-0472">Membrane</keyword>
<keyword id="KW-0479">Metal-binding</keyword>
<keyword id="KW-0520">NAD</keyword>
<keyword id="KW-0874">Quinone</keyword>
<keyword id="KW-0677">Repeat</keyword>
<keyword id="KW-1278">Translocase</keyword>
<keyword id="KW-0830">Ubiquinone</keyword>
<reference key="1">
    <citation type="journal article" date="2010" name="J. Bacteriol.">
        <title>Genome sequence of the deep-rooted Yersinia pestis strain Angola reveals new insights into the evolution and pangenome of the plague bacterium.</title>
        <authorList>
            <person name="Eppinger M."/>
            <person name="Worsham P.L."/>
            <person name="Nikolich M.P."/>
            <person name="Riley D.R."/>
            <person name="Sebastian Y."/>
            <person name="Mou S."/>
            <person name="Achtman M."/>
            <person name="Lindler L.E."/>
            <person name="Ravel J."/>
        </authorList>
    </citation>
    <scope>NUCLEOTIDE SEQUENCE [LARGE SCALE GENOMIC DNA]</scope>
    <source>
        <strain>Angola</strain>
    </source>
</reference>
<gene>
    <name evidence="1" type="primary">nuoI</name>
    <name type="ordered locus">YpAngola_A1809</name>
</gene>
<organism>
    <name type="scientific">Yersinia pestis bv. Antiqua (strain Angola)</name>
    <dbReference type="NCBI Taxonomy" id="349746"/>
    <lineage>
        <taxon>Bacteria</taxon>
        <taxon>Pseudomonadati</taxon>
        <taxon>Pseudomonadota</taxon>
        <taxon>Gammaproteobacteria</taxon>
        <taxon>Enterobacterales</taxon>
        <taxon>Yersiniaceae</taxon>
        <taxon>Yersinia</taxon>
    </lineage>
</organism>
<protein>
    <recommendedName>
        <fullName evidence="1">NADH-quinone oxidoreductase subunit I</fullName>
        <ecNumber evidence="1">7.1.1.-</ecNumber>
    </recommendedName>
    <alternativeName>
        <fullName evidence="1">NADH dehydrogenase I subunit I</fullName>
    </alternativeName>
    <alternativeName>
        <fullName evidence="1">NDH-1 subunit I</fullName>
    </alternativeName>
</protein>
<comment type="function">
    <text evidence="1">NDH-1 shuttles electrons from NADH, via FMN and iron-sulfur (Fe-S) centers, to quinones in the respiratory chain. The immediate electron acceptor for the enzyme in this species is believed to be ubiquinone. Couples the redox reaction to proton translocation (for every two electrons transferred, four hydrogen ions are translocated across the cytoplasmic membrane), and thus conserves the redox energy in a proton gradient.</text>
</comment>
<comment type="catalytic activity">
    <reaction evidence="1">
        <text>a quinone + NADH + 5 H(+)(in) = a quinol + NAD(+) + 4 H(+)(out)</text>
        <dbReference type="Rhea" id="RHEA:57888"/>
        <dbReference type="ChEBI" id="CHEBI:15378"/>
        <dbReference type="ChEBI" id="CHEBI:24646"/>
        <dbReference type="ChEBI" id="CHEBI:57540"/>
        <dbReference type="ChEBI" id="CHEBI:57945"/>
        <dbReference type="ChEBI" id="CHEBI:132124"/>
    </reaction>
</comment>
<comment type="cofactor">
    <cofactor evidence="1">
        <name>[4Fe-4S] cluster</name>
        <dbReference type="ChEBI" id="CHEBI:49883"/>
    </cofactor>
    <text evidence="1">Binds 2 [4Fe-4S] clusters per subunit.</text>
</comment>
<comment type="subunit">
    <text evidence="1">NDH-1 is composed of 13 different subunits. Subunits NuoA, H, J, K, L, M, N constitute the membrane sector of the complex.</text>
</comment>
<comment type="subcellular location">
    <subcellularLocation>
        <location evidence="1">Cell inner membrane</location>
        <topology evidence="1">Peripheral membrane protein</topology>
    </subcellularLocation>
</comment>
<comment type="similarity">
    <text evidence="1">Belongs to the complex I 23 kDa subunit family.</text>
</comment>
<evidence type="ECO:0000255" key="1">
    <source>
        <dbReference type="HAMAP-Rule" id="MF_01351"/>
    </source>
</evidence>
<dbReference type="EC" id="7.1.1.-" evidence="1"/>
<dbReference type="EMBL" id="CP000901">
    <property type="protein sequence ID" value="ABX87895.1"/>
    <property type="molecule type" value="Genomic_DNA"/>
</dbReference>
<dbReference type="RefSeq" id="WP_002210273.1">
    <property type="nucleotide sequence ID" value="NZ_CP009935.1"/>
</dbReference>
<dbReference type="SMR" id="A9R6L4"/>
<dbReference type="GeneID" id="96666079"/>
<dbReference type="KEGG" id="ypg:YpAngola_A1809"/>
<dbReference type="PATRIC" id="fig|349746.12.peg.2785"/>
<dbReference type="GO" id="GO:0005886">
    <property type="term" value="C:plasma membrane"/>
    <property type="evidence" value="ECO:0007669"/>
    <property type="project" value="UniProtKB-SubCell"/>
</dbReference>
<dbReference type="GO" id="GO:0051539">
    <property type="term" value="F:4 iron, 4 sulfur cluster binding"/>
    <property type="evidence" value="ECO:0007669"/>
    <property type="project" value="UniProtKB-KW"/>
</dbReference>
<dbReference type="GO" id="GO:0005506">
    <property type="term" value="F:iron ion binding"/>
    <property type="evidence" value="ECO:0007669"/>
    <property type="project" value="UniProtKB-UniRule"/>
</dbReference>
<dbReference type="GO" id="GO:0050136">
    <property type="term" value="F:NADH:ubiquinone reductase (non-electrogenic) activity"/>
    <property type="evidence" value="ECO:0007669"/>
    <property type="project" value="UniProtKB-UniRule"/>
</dbReference>
<dbReference type="GO" id="GO:0048038">
    <property type="term" value="F:quinone binding"/>
    <property type="evidence" value="ECO:0007669"/>
    <property type="project" value="UniProtKB-KW"/>
</dbReference>
<dbReference type="GO" id="GO:0009060">
    <property type="term" value="P:aerobic respiration"/>
    <property type="evidence" value="ECO:0007669"/>
    <property type="project" value="TreeGrafter"/>
</dbReference>
<dbReference type="FunFam" id="3.30.70.3270:FF:000002">
    <property type="entry name" value="NADH-quinone oxidoreductase subunit I"/>
    <property type="match status" value="1"/>
</dbReference>
<dbReference type="Gene3D" id="3.30.70.3270">
    <property type="match status" value="1"/>
</dbReference>
<dbReference type="HAMAP" id="MF_01351">
    <property type="entry name" value="NDH1_NuoI"/>
    <property type="match status" value="1"/>
</dbReference>
<dbReference type="InterPro" id="IPR017896">
    <property type="entry name" value="4Fe4S_Fe-S-bd"/>
</dbReference>
<dbReference type="InterPro" id="IPR017900">
    <property type="entry name" value="4Fe4S_Fe_S_CS"/>
</dbReference>
<dbReference type="InterPro" id="IPR010226">
    <property type="entry name" value="NADH_quinone_OxRdtase_chainI"/>
</dbReference>
<dbReference type="NCBIfam" id="TIGR01971">
    <property type="entry name" value="NuoI"/>
    <property type="match status" value="1"/>
</dbReference>
<dbReference type="NCBIfam" id="NF004536">
    <property type="entry name" value="PRK05888.1-1"/>
    <property type="match status" value="1"/>
</dbReference>
<dbReference type="PANTHER" id="PTHR10849:SF20">
    <property type="entry name" value="NADH DEHYDROGENASE [UBIQUINONE] IRON-SULFUR PROTEIN 8, MITOCHONDRIAL"/>
    <property type="match status" value="1"/>
</dbReference>
<dbReference type="PANTHER" id="PTHR10849">
    <property type="entry name" value="NADH DEHYDROGENASE UBIQUINONE IRON-SULFUR PROTEIN 8, MITOCHONDRIAL"/>
    <property type="match status" value="1"/>
</dbReference>
<dbReference type="Pfam" id="PF12838">
    <property type="entry name" value="Fer4_7"/>
    <property type="match status" value="1"/>
</dbReference>
<dbReference type="SUPFAM" id="SSF54862">
    <property type="entry name" value="4Fe-4S ferredoxins"/>
    <property type="match status" value="1"/>
</dbReference>
<dbReference type="PROSITE" id="PS00198">
    <property type="entry name" value="4FE4S_FER_1"/>
    <property type="match status" value="2"/>
</dbReference>
<dbReference type="PROSITE" id="PS51379">
    <property type="entry name" value="4FE4S_FER_2"/>
    <property type="match status" value="2"/>
</dbReference>